<sequence length="736" mass="80526">MNATIKEIALPNKTETFEFGAIAKQANGSVLYRCGKSVLLASVCYESDERVKEDFLPLTVQYIEKSYAAGKFPGGFIKRESKPGDFETLTSRIIDRSLRPLFPKGYAHPTQITVMVLSAQNDADLQTMALNAASAALFVSDIPLRKPVHGLRIGKINGALVVNPTTKEMSESTLDLFVSGVEEDLLMIEMRTLASDEINNTCFVGDCGMVAASASDILKIHQANEMKEEELLEALELAKTSIKKASACYVEAFTPLAKPDAILELKPDITSSEIYQYIKENHAIAIKEAITRMAKSERHSDLKRIAKEIASSERAQESEWSFEAVYETVGKYKREAVRALILEERRRADGRGLKEVRPIDIQTNILPNAHASALFTRGETQALVVATLGGDMDAQSYELLTEKGSSKERFMVHYNFPSFSVGEAGMVGAPGRRELGHGNLAKRALEPTIEEWGAQTIRLVSEILESNGSSSMATVCGGSLALKAAGINTTALVAGVAMGLIVEAEKHAILTDIMGLEDHDGDMDFKIAGTSTGITAMQMDIKLGGLSMEILKEALYQAKEGREHILGIMEKAQSEIIINDEILPSLQIFSINPGRIVDIIGQAGKTIKEIIERFEVAIDLNRDNGEVKVTGSNKQKVEAAKEHILSISNQEAPQRVRVADVYSAGEVFKGKVKKIVDFGAFIELPKGGDGLLHVSKIVQHRDQRIDEVIKEGEEIEVQILSINKNKVELGRATRPN</sequence>
<gene>
    <name evidence="1" type="primary">pnp</name>
    <name type="ordered locus">WS0899</name>
</gene>
<reference key="1">
    <citation type="journal article" date="2003" name="Proc. Natl. Acad. Sci. U.S.A.">
        <title>Complete genome sequence and analysis of Wolinella succinogenes.</title>
        <authorList>
            <person name="Baar C."/>
            <person name="Eppinger M."/>
            <person name="Raddatz G."/>
            <person name="Simon J."/>
            <person name="Lanz C."/>
            <person name="Klimmek O."/>
            <person name="Nandakumar R."/>
            <person name="Gross R."/>
            <person name="Rosinus A."/>
            <person name="Keller H."/>
            <person name="Jagtap P."/>
            <person name="Linke B."/>
            <person name="Meyer F."/>
            <person name="Lederer H."/>
            <person name="Schuster S.C."/>
        </authorList>
    </citation>
    <scope>NUCLEOTIDE SEQUENCE [LARGE SCALE GENOMIC DNA]</scope>
    <source>
        <strain>ATCC 29543 / DSM 1740 / CCUG 13145 / JCM 31913 / LMG 7466 / NCTC 11488 / FDC 602W</strain>
    </source>
</reference>
<keyword id="KW-0963">Cytoplasm</keyword>
<keyword id="KW-0460">Magnesium</keyword>
<keyword id="KW-0479">Metal-binding</keyword>
<keyword id="KW-0548">Nucleotidyltransferase</keyword>
<keyword id="KW-1185">Reference proteome</keyword>
<keyword id="KW-0694">RNA-binding</keyword>
<keyword id="KW-0808">Transferase</keyword>
<evidence type="ECO:0000255" key="1">
    <source>
        <dbReference type="HAMAP-Rule" id="MF_01595"/>
    </source>
</evidence>
<accession>Q7M9I4</accession>
<dbReference type="EC" id="2.7.7.8" evidence="1"/>
<dbReference type="EMBL" id="BX571659">
    <property type="protein sequence ID" value="CAE10004.1"/>
    <property type="molecule type" value="Genomic_DNA"/>
</dbReference>
<dbReference type="RefSeq" id="WP_011138801.1">
    <property type="nucleotide sequence ID" value="NC_005090.1"/>
</dbReference>
<dbReference type="SMR" id="Q7M9I4"/>
<dbReference type="STRING" id="273121.WS0899"/>
<dbReference type="KEGG" id="wsu:WS0899"/>
<dbReference type="eggNOG" id="COG1185">
    <property type="taxonomic scope" value="Bacteria"/>
</dbReference>
<dbReference type="HOGENOM" id="CLU_004217_2_2_7"/>
<dbReference type="Proteomes" id="UP000000422">
    <property type="component" value="Chromosome"/>
</dbReference>
<dbReference type="GO" id="GO:0005829">
    <property type="term" value="C:cytosol"/>
    <property type="evidence" value="ECO:0007669"/>
    <property type="project" value="TreeGrafter"/>
</dbReference>
<dbReference type="GO" id="GO:0000175">
    <property type="term" value="F:3'-5'-RNA exonuclease activity"/>
    <property type="evidence" value="ECO:0007669"/>
    <property type="project" value="TreeGrafter"/>
</dbReference>
<dbReference type="GO" id="GO:0000287">
    <property type="term" value="F:magnesium ion binding"/>
    <property type="evidence" value="ECO:0007669"/>
    <property type="project" value="UniProtKB-UniRule"/>
</dbReference>
<dbReference type="GO" id="GO:0004654">
    <property type="term" value="F:polyribonucleotide nucleotidyltransferase activity"/>
    <property type="evidence" value="ECO:0007669"/>
    <property type="project" value="UniProtKB-UniRule"/>
</dbReference>
<dbReference type="GO" id="GO:0003723">
    <property type="term" value="F:RNA binding"/>
    <property type="evidence" value="ECO:0007669"/>
    <property type="project" value="UniProtKB-UniRule"/>
</dbReference>
<dbReference type="GO" id="GO:0006402">
    <property type="term" value="P:mRNA catabolic process"/>
    <property type="evidence" value="ECO:0007669"/>
    <property type="project" value="UniProtKB-UniRule"/>
</dbReference>
<dbReference type="GO" id="GO:0006396">
    <property type="term" value="P:RNA processing"/>
    <property type="evidence" value="ECO:0007669"/>
    <property type="project" value="InterPro"/>
</dbReference>
<dbReference type="CDD" id="cd02393">
    <property type="entry name" value="KH-I_PNPase"/>
    <property type="match status" value="1"/>
</dbReference>
<dbReference type="CDD" id="cd11364">
    <property type="entry name" value="RNase_PH_PNPase_2"/>
    <property type="match status" value="1"/>
</dbReference>
<dbReference type="FunFam" id="3.30.1370.10:FF:000001">
    <property type="entry name" value="Polyribonucleotide nucleotidyltransferase"/>
    <property type="match status" value="1"/>
</dbReference>
<dbReference type="FunFam" id="3.30.230.70:FF:000026">
    <property type="entry name" value="Polyribonucleotide nucleotidyltransferase"/>
    <property type="match status" value="1"/>
</dbReference>
<dbReference type="FunFam" id="3.30.230.70:FF:000029">
    <property type="entry name" value="Polyribonucleotide nucleotidyltransferase"/>
    <property type="match status" value="1"/>
</dbReference>
<dbReference type="Gene3D" id="3.30.230.70">
    <property type="entry name" value="GHMP Kinase, N-terminal domain"/>
    <property type="match status" value="2"/>
</dbReference>
<dbReference type="Gene3D" id="3.30.1370.10">
    <property type="entry name" value="K Homology domain, type 1"/>
    <property type="match status" value="1"/>
</dbReference>
<dbReference type="Gene3D" id="2.40.50.140">
    <property type="entry name" value="Nucleic acid-binding proteins"/>
    <property type="match status" value="1"/>
</dbReference>
<dbReference type="HAMAP" id="MF_01595">
    <property type="entry name" value="PNPase"/>
    <property type="match status" value="1"/>
</dbReference>
<dbReference type="InterPro" id="IPR001247">
    <property type="entry name" value="ExoRNase_PH_dom1"/>
</dbReference>
<dbReference type="InterPro" id="IPR015847">
    <property type="entry name" value="ExoRNase_PH_dom2"/>
</dbReference>
<dbReference type="InterPro" id="IPR036345">
    <property type="entry name" value="ExoRNase_PH_dom2_sf"/>
</dbReference>
<dbReference type="InterPro" id="IPR004087">
    <property type="entry name" value="KH_dom"/>
</dbReference>
<dbReference type="InterPro" id="IPR004088">
    <property type="entry name" value="KH_dom_type_1"/>
</dbReference>
<dbReference type="InterPro" id="IPR036612">
    <property type="entry name" value="KH_dom_type_1_sf"/>
</dbReference>
<dbReference type="InterPro" id="IPR012340">
    <property type="entry name" value="NA-bd_OB-fold"/>
</dbReference>
<dbReference type="InterPro" id="IPR012162">
    <property type="entry name" value="PNPase"/>
</dbReference>
<dbReference type="InterPro" id="IPR027408">
    <property type="entry name" value="PNPase/RNase_PH_dom_sf"/>
</dbReference>
<dbReference type="InterPro" id="IPR015848">
    <property type="entry name" value="PNPase_PH_RNA-bd_bac/org-type"/>
</dbReference>
<dbReference type="InterPro" id="IPR020568">
    <property type="entry name" value="Ribosomal_Su5_D2-typ_SF"/>
</dbReference>
<dbReference type="InterPro" id="IPR003029">
    <property type="entry name" value="S1_domain"/>
</dbReference>
<dbReference type="NCBIfam" id="NF008805">
    <property type="entry name" value="PRK11824.1"/>
    <property type="match status" value="1"/>
</dbReference>
<dbReference type="PANTHER" id="PTHR11252">
    <property type="entry name" value="POLYRIBONUCLEOTIDE NUCLEOTIDYLTRANSFERASE"/>
    <property type="match status" value="1"/>
</dbReference>
<dbReference type="PANTHER" id="PTHR11252:SF0">
    <property type="entry name" value="POLYRIBONUCLEOTIDE NUCLEOTIDYLTRANSFERASE 1, MITOCHONDRIAL"/>
    <property type="match status" value="1"/>
</dbReference>
<dbReference type="Pfam" id="PF00013">
    <property type="entry name" value="KH_1"/>
    <property type="match status" value="1"/>
</dbReference>
<dbReference type="Pfam" id="PF03726">
    <property type="entry name" value="PNPase"/>
    <property type="match status" value="1"/>
</dbReference>
<dbReference type="Pfam" id="PF01138">
    <property type="entry name" value="RNase_PH"/>
    <property type="match status" value="2"/>
</dbReference>
<dbReference type="Pfam" id="PF03725">
    <property type="entry name" value="RNase_PH_C"/>
    <property type="match status" value="2"/>
</dbReference>
<dbReference type="Pfam" id="PF00575">
    <property type="entry name" value="S1"/>
    <property type="match status" value="1"/>
</dbReference>
<dbReference type="PIRSF" id="PIRSF005499">
    <property type="entry name" value="PNPase"/>
    <property type="match status" value="1"/>
</dbReference>
<dbReference type="SMART" id="SM00322">
    <property type="entry name" value="KH"/>
    <property type="match status" value="1"/>
</dbReference>
<dbReference type="SMART" id="SM00316">
    <property type="entry name" value="S1"/>
    <property type="match status" value="1"/>
</dbReference>
<dbReference type="SUPFAM" id="SSF54791">
    <property type="entry name" value="Eukaryotic type KH-domain (KH-domain type I)"/>
    <property type="match status" value="1"/>
</dbReference>
<dbReference type="SUPFAM" id="SSF50249">
    <property type="entry name" value="Nucleic acid-binding proteins"/>
    <property type="match status" value="1"/>
</dbReference>
<dbReference type="SUPFAM" id="SSF55666">
    <property type="entry name" value="Ribonuclease PH domain 2-like"/>
    <property type="match status" value="2"/>
</dbReference>
<dbReference type="SUPFAM" id="SSF54211">
    <property type="entry name" value="Ribosomal protein S5 domain 2-like"/>
    <property type="match status" value="2"/>
</dbReference>
<dbReference type="PROSITE" id="PS50084">
    <property type="entry name" value="KH_TYPE_1"/>
    <property type="match status" value="1"/>
</dbReference>
<dbReference type="PROSITE" id="PS50126">
    <property type="entry name" value="S1"/>
    <property type="match status" value="1"/>
</dbReference>
<name>PNP_WOLSU</name>
<proteinExistence type="inferred from homology"/>
<protein>
    <recommendedName>
        <fullName evidence="1">Polyribonucleotide nucleotidyltransferase</fullName>
        <ecNumber evidence="1">2.7.7.8</ecNumber>
    </recommendedName>
    <alternativeName>
        <fullName evidence="1">Polynucleotide phosphorylase</fullName>
        <shortName evidence="1">PNPase</shortName>
    </alternativeName>
</protein>
<comment type="function">
    <text evidence="1">Involved in mRNA degradation. Catalyzes the phosphorolysis of single-stranded polyribonucleotides processively in the 3'- to 5'-direction.</text>
</comment>
<comment type="catalytic activity">
    <reaction evidence="1">
        <text>RNA(n+1) + phosphate = RNA(n) + a ribonucleoside 5'-diphosphate</text>
        <dbReference type="Rhea" id="RHEA:22096"/>
        <dbReference type="Rhea" id="RHEA-COMP:14527"/>
        <dbReference type="Rhea" id="RHEA-COMP:17342"/>
        <dbReference type="ChEBI" id="CHEBI:43474"/>
        <dbReference type="ChEBI" id="CHEBI:57930"/>
        <dbReference type="ChEBI" id="CHEBI:140395"/>
        <dbReference type="EC" id="2.7.7.8"/>
    </reaction>
</comment>
<comment type="cofactor">
    <cofactor evidence="1">
        <name>Mg(2+)</name>
        <dbReference type="ChEBI" id="CHEBI:18420"/>
    </cofactor>
</comment>
<comment type="subcellular location">
    <subcellularLocation>
        <location evidence="1">Cytoplasm</location>
    </subcellularLocation>
</comment>
<comment type="similarity">
    <text evidence="1">Belongs to the polyribonucleotide nucleotidyltransferase family.</text>
</comment>
<organism>
    <name type="scientific">Wolinella succinogenes (strain ATCC 29543 / DSM 1740 / CCUG 13145 / JCM 31913 / LMG 7466 / NCTC 11488 / FDC 602W)</name>
    <name type="common">Vibrio succinogenes</name>
    <dbReference type="NCBI Taxonomy" id="273121"/>
    <lineage>
        <taxon>Bacteria</taxon>
        <taxon>Pseudomonadati</taxon>
        <taxon>Campylobacterota</taxon>
        <taxon>Epsilonproteobacteria</taxon>
        <taxon>Campylobacterales</taxon>
        <taxon>Helicobacteraceae</taxon>
        <taxon>Wolinella</taxon>
    </lineage>
</organism>
<feature type="chain" id="PRO_0000329937" description="Polyribonucleotide nucleotidyltransferase">
    <location>
        <begin position="1"/>
        <end position="736"/>
    </location>
</feature>
<feature type="domain" description="KH" evidence="1">
    <location>
        <begin position="584"/>
        <end position="644"/>
    </location>
</feature>
<feature type="domain" description="S1 motif" evidence="1">
    <location>
        <begin position="665"/>
        <end position="732"/>
    </location>
</feature>
<feature type="binding site" evidence="1">
    <location>
        <position position="518"/>
    </location>
    <ligand>
        <name>Mg(2+)</name>
        <dbReference type="ChEBI" id="CHEBI:18420"/>
    </ligand>
</feature>
<feature type="binding site" evidence="1">
    <location>
        <position position="524"/>
    </location>
    <ligand>
        <name>Mg(2+)</name>
        <dbReference type="ChEBI" id="CHEBI:18420"/>
    </ligand>
</feature>